<name>TRMB_XYLFM</name>
<keyword id="KW-0489">Methyltransferase</keyword>
<keyword id="KW-0949">S-adenosyl-L-methionine</keyword>
<keyword id="KW-0808">Transferase</keyword>
<keyword id="KW-0819">tRNA processing</keyword>
<dbReference type="EC" id="2.1.1.33" evidence="2"/>
<dbReference type="EMBL" id="CP000941">
    <property type="protein sequence ID" value="ACA12926.1"/>
    <property type="molecule type" value="Genomic_DNA"/>
</dbReference>
<dbReference type="RefSeq" id="WP_012338092.1">
    <property type="nucleotide sequence ID" value="NC_010513.1"/>
</dbReference>
<dbReference type="SMR" id="B0U509"/>
<dbReference type="KEGG" id="xfm:Xfasm12_2060"/>
<dbReference type="HOGENOM" id="CLU_050910_0_1_6"/>
<dbReference type="UniPathway" id="UPA00989"/>
<dbReference type="GO" id="GO:0043527">
    <property type="term" value="C:tRNA methyltransferase complex"/>
    <property type="evidence" value="ECO:0007669"/>
    <property type="project" value="TreeGrafter"/>
</dbReference>
<dbReference type="GO" id="GO:0008176">
    <property type="term" value="F:tRNA (guanine(46)-N7)-methyltransferase activity"/>
    <property type="evidence" value="ECO:0007669"/>
    <property type="project" value="UniProtKB-UniRule"/>
</dbReference>
<dbReference type="FunFam" id="3.40.50.150:FF:000035">
    <property type="entry name" value="tRNA (guanine-N(7)-)-methyltransferase"/>
    <property type="match status" value="1"/>
</dbReference>
<dbReference type="Gene3D" id="3.40.50.150">
    <property type="entry name" value="Vaccinia Virus protein VP39"/>
    <property type="match status" value="1"/>
</dbReference>
<dbReference type="HAMAP" id="MF_01057">
    <property type="entry name" value="tRNA_methyltr_TrmB"/>
    <property type="match status" value="1"/>
</dbReference>
<dbReference type="InterPro" id="IPR029063">
    <property type="entry name" value="SAM-dependent_MTases_sf"/>
</dbReference>
<dbReference type="InterPro" id="IPR003358">
    <property type="entry name" value="tRNA_(Gua-N-7)_MeTrfase_Trmb"/>
</dbReference>
<dbReference type="InterPro" id="IPR055361">
    <property type="entry name" value="tRNA_methyltr_TrmB_bact"/>
</dbReference>
<dbReference type="NCBIfam" id="TIGR00091">
    <property type="entry name" value="tRNA (guanosine(46)-N7)-methyltransferase TrmB"/>
    <property type="match status" value="1"/>
</dbReference>
<dbReference type="PANTHER" id="PTHR23417">
    <property type="entry name" value="3-DEOXY-D-MANNO-OCTULOSONIC-ACID TRANSFERASE/TRNA GUANINE-N 7 - -METHYLTRANSFERASE"/>
    <property type="match status" value="1"/>
</dbReference>
<dbReference type="PANTHER" id="PTHR23417:SF14">
    <property type="entry name" value="PENTACOTRIPEPTIDE-REPEAT REGION OF PRORP DOMAIN-CONTAINING PROTEIN"/>
    <property type="match status" value="1"/>
</dbReference>
<dbReference type="Pfam" id="PF02390">
    <property type="entry name" value="Methyltransf_4"/>
    <property type="match status" value="1"/>
</dbReference>
<dbReference type="SUPFAM" id="SSF53335">
    <property type="entry name" value="S-adenosyl-L-methionine-dependent methyltransferases"/>
    <property type="match status" value="1"/>
</dbReference>
<dbReference type="PROSITE" id="PS51625">
    <property type="entry name" value="SAM_MT_TRMB"/>
    <property type="match status" value="1"/>
</dbReference>
<gene>
    <name evidence="2" type="primary">trmB</name>
    <name type="ordered locus">Xfasm12_2060</name>
</gene>
<organism>
    <name type="scientific">Xylella fastidiosa (strain M12)</name>
    <dbReference type="NCBI Taxonomy" id="405440"/>
    <lineage>
        <taxon>Bacteria</taxon>
        <taxon>Pseudomonadati</taxon>
        <taxon>Pseudomonadota</taxon>
        <taxon>Gammaproteobacteria</taxon>
        <taxon>Lysobacterales</taxon>
        <taxon>Lysobacteraceae</taxon>
        <taxon>Xylella</taxon>
    </lineage>
</organism>
<sequence>MMNLLSSDGVQVLPRPFTLNERRREVRSFVLRQGHFTPAQKRAFDHYWPRFGVDFIGQLRDLDVLFGRSAPKVLEVGFGNGAALRFAAQHEPRYDYIGIEVYAPGVGRLLNGLAEDGSRHVRLYHYDAVEVLNKEIADGALDEIRIYFPDPWHKKRHHKRRLIQPLFATLLVRKLRVGGCLHMATDWADYAEQMWDVLDATPGLVNRAGLRGQVPCPDWRVQTRFERRGQNLGHRVWNLLYDRV</sequence>
<reference key="1">
    <citation type="journal article" date="2010" name="J. Bacteriol.">
        <title>Whole genome sequences of two Xylella fastidiosa strains (M12 and M23) causing almond leaf scorch disease in California.</title>
        <authorList>
            <person name="Chen J."/>
            <person name="Xie G."/>
            <person name="Han S."/>
            <person name="Chertkov O."/>
            <person name="Sims D."/>
            <person name="Civerolo E.L."/>
        </authorList>
    </citation>
    <scope>NUCLEOTIDE SEQUENCE [LARGE SCALE GENOMIC DNA]</scope>
    <source>
        <strain>M12</strain>
    </source>
</reference>
<evidence type="ECO:0000250" key="1"/>
<evidence type="ECO:0000255" key="2">
    <source>
        <dbReference type="HAMAP-Rule" id="MF_01057"/>
    </source>
</evidence>
<proteinExistence type="inferred from homology"/>
<accession>B0U509</accession>
<comment type="function">
    <text evidence="2">Catalyzes the formation of N(7)-methylguanine at position 46 (m7G46) in tRNA.</text>
</comment>
<comment type="catalytic activity">
    <reaction evidence="2">
        <text>guanosine(46) in tRNA + S-adenosyl-L-methionine = N(7)-methylguanosine(46) in tRNA + S-adenosyl-L-homocysteine</text>
        <dbReference type="Rhea" id="RHEA:42708"/>
        <dbReference type="Rhea" id="RHEA-COMP:10188"/>
        <dbReference type="Rhea" id="RHEA-COMP:10189"/>
        <dbReference type="ChEBI" id="CHEBI:57856"/>
        <dbReference type="ChEBI" id="CHEBI:59789"/>
        <dbReference type="ChEBI" id="CHEBI:74269"/>
        <dbReference type="ChEBI" id="CHEBI:74480"/>
        <dbReference type="EC" id="2.1.1.33"/>
    </reaction>
</comment>
<comment type="pathway">
    <text evidence="2">tRNA modification; N(7)-methylguanine-tRNA biosynthesis.</text>
</comment>
<comment type="similarity">
    <text evidence="2">Belongs to the class I-like SAM-binding methyltransferase superfamily. TrmB family.</text>
</comment>
<feature type="chain" id="PRO_1000136376" description="tRNA (guanine-N(7)-)-methyltransferase">
    <location>
        <begin position="1"/>
        <end position="244"/>
    </location>
</feature>
<feature type="active site" evidence="1">
    <location>
        <position position="150"/>
    </location>
</feature>
<feature type="binding site" evidence="2">
    <location>
        <position position="75"/>
    </location>
    <ligand>
        <name>S-adenosyl-L-methionine</name>
        <dbReference type="ChEBI" id="CHEBI:59789"/>
    </ligand>
</feature>
<feature type="binding site" evidence="2">
    <location>
        <position position="100"/>
    </location>
    <ligand>
        <name>S-adenosyl-L-methionine</name>
        <dbReference type="ChEBI" id="CHEBI:59789"/>
    </ligand>
</feature>
<feature type="binding site" evidence="2">
    <location>
        <position position="127"/>
    </location>
    <ligand>
        <name>S-adenosyl-L-methionine</name>
        <dbReference type="ChEBI" id="CHEBI:59789"/>
    </ligand>
</feature>
<feature type="binding site" evidence="2">
    <location>
        <position position="150"/>
    </location>
    <ligand>
        <name>S-adenosyl-L-methionine</name>
        <dbReference type="ChEBI" id="CHEBI:59789"/>
    </ligand>
</feature>
<feature type="binding site" evidence="2">
    <location>
        <position position="154"/>
    </location>
    <ligand>
        <name>substrate</name>
    </ligand>
</feature>
<feature type="binding site" evidence="2">
    <location>
        <position position="186"/>
    </location>
    <ligand>
        <name>substrate</name>
    </ligand>
</feature>
<feature type="binding site" evidence="2">
    <location>
        <begin position="223"/>
        <end position="226"/>
    </location>
    <ligand>
        <name>substrate</name>
    </ligand>
</feature>
<protein>
    <recommendedName>
        <fullName evidence="2">tRNA (guanine-N(7)-)-methyltransferase</fullName>
        <ecNumber evidence="2">2.1.1.33</ecNumber>
    </recommendedName>
    <alternativeName>
        <fullName evidence="2">tRNA (guanine(46)-N(7))-methyltransferase</fullName>
    </alternativeName>
    <alternativeName>
        <fullName evidence="2">tRNA(m7G46)-methyltransferase</fullName>
    </alternativeName>
</protein>